<sequence>MTKGILGRKIGMTQVFAENGELIPVTVIAANPNVVLQKKTTETDGYNAIQLGFEDKREKLTNKPEQGHTAKASTTPKRFIREIRDADVDGLEVGQEVKVDVFATGEIVDVTGISKGKGFQGVIKRHGQSRGPMSHGSRYHRRPGSMGPVAPNRVFKGKKLAGRMGGDQVTIQNLEIVQVDTERNLLLVKGNVPGAKKSLVVVQGAVKVSK</sequence>
<comment type="function">
    <text evidence="1">One of the primary rRNA binding proteins, it binds directly near the 3'-end of the 23S rRNA, where it nucleates assembly of the 50S subunit.</text>
</comment>
<comment type="subunit">
    <text evidence="1">Part of the 50S ribosomal subunit. Forms a cluster with proteins L14 and L19.</text>
</comment>
<comment type="similarity">
    <text evidence="1">Belongs to the universal ribosomal protein uL3 family.</text>
</comment>
<organism>
    <name type="scientific">Bacillus cereus (strain ZK / E33L)</name>
    <dbReference type="NCBI Taxonomy" id="288681"/>
    <lineage>
        <taxon>Bacteria</taxon>
        <taxon>Bacillati</taxon>
        <taxon>Bacillota</taxon>
        <taxon>Bacilli</taxon>
        <taxon>Bacillales</taxon>
        <taxon>Bacillaceae</taxon>
        <taxon>Bacillus</taxon>
        <taxon>Bacillus cereus group</taxon>
    </lineage>
</organism>
<keyword id="KW-0687">Ribonucleoprotein</keyword>
<keyword id="KW-0689">Ribosomal protein</keyword>
<keyword id="KW-0694">RNA-binding</keyword>
<keyword id="KW-0699">rRNA-binding</keyword>
<feature type="chain" id="PRO_0000241311" description="Large ribosomal subunit protein uL3">
    <location>
        <begin position="1"/>
        <end position="210"/>
    </location>
</feature>
<feature type="region of interest" description="Disordered" evidence="2">
    <location>
        <begin position="125"/>
        <end position="151"/>
    </location>
</feature>
<protein>
    <recommendedName>
        <fullName evidence="1">Large ribosomal subunit protein uL3</fullName>
    </recommendedName>
    <alternativeName>
        <fullName evidence="3">50S ribosomal protein L3</fullName>
    </alternativeName>
</protein>
<evidence type="ECO:0000255" key="1">
    <source>
        <dbReference type="HAMAP-Rule" id="MF_01325"/>
    </source>
</evidence>
<evidence type="ECO:0000256" key="2">
    <source>
        <dbReference type="SAM" id="MobiDB-lite"/>
    </source>
</evidence>
<evidence type="ECO:0000305" key="3"/>
<reference key="1">
    <citation type="journal article" date="2006" name="J. Bacteriol.">
        <title>Pathogenomic sequence analysis of Bacillus cereus and Bacillus thuringiensis isolates closely related to Bacillus anthracis.</title>
        <authorList>
            <person name="Han C.S."/>
            <person name="Xie G."/>
            <person name="Challacombe J.F."/>
            <person name="Altherr M.R."/>
            <person name="Bhotika S.S."/>
            <person name="Bruce D."/>
            <person name="Campbell C.S."/>
            <person name="Campbell M.L."/>
            <person name="Chen J."/>
            <person name="Chertkov O."/>
            <person name="Cleland C."/>
            <person name="Dimitrijevic M."/>
            <person name="Doggett N.A."/>
            <person name="Fawcett J.J."/>
            <person name="Glavina T."/>
            <person name="Goodwin L.A."/>
            <person name="Hill K.K."/>
            <person name="Hitchcock P."/>
            <person name="Jackson P.J."/>
            <person name="Keim P."/>
            <person name="Kewalramani A.R."/>
            <person name="Longmire J."/>
            <person name="Lucas S."/>
            <person name="Malfatti S."/>
            <person name="McMurry K."/>
            <person name="Meincke L.J."/>
            <person name="Misra M."/>
            <person name="Moseman B.L."/>
            <person name="Mundt M."/>
            <person name="Munk A.C."/>
            <person name="Okinaka R.T."/>
            <person name="Parson-Quintana B."/>
            <person name="Reilly L.P."/>
            <person name="Richardson P."/>
            <person name="Robinson D.L."/>
            <person name="Rubin E."/>
            <person name="Saunders E."/>
            <person name="Tapia R."/>
            <person name="Tesmer J.G."/>
            <person name="Thayer N."/>
            <person name="Thompson L.S."/>
            <person name="Tice H."/>
            <person name="Ticknor L.O."/>
            <person name="Wills P.L."/>
            <person name="Brettin T.S."/>
            <person name="Gilna P."/>
        </authorList>
    </citation>
    <scope>NUCLEOTIDE SEQUENCE [LARGE SCALE GENOMIC DNA]</scope>
    <source>
        <strain>ZK / E33L</strain>
    </source>
</reference>
<proteinExistence type="inferred from homology"/>
<dbReference type="EMBL" id="CP000001">
    <property type="protein sequence ID" value="AAU20127.1"/>
    <property type="molecule type" value="Genomic_DNA"/>
</dbReference>
<dbReference type="RefSeq" id="WP_000160207.1">
    <property type="nucleotide sequence ID" value="NZ_CP009968.1"/>
</dbReference>
<dbReference type="SMR" id="Q63H90"/>
<dbReference type="GeneID" id="93010943"/>
<dbReference type="KEGG" id="bcz:BCE33L0104"/>
<dbReference type="PATRIC" id="fig|288681.22.peg.47"/>
<dbReference type="Proteomes" id="UP000002612">
    <property type="component" value="Chromosome"/>
</dbReference>
<dbReference type="GO" id="GO:0022625">
    <property type="term" value="C:cytosolic large ribosomal subunit"/>
    <property type="evidence" value="ECO:0007669"/>
    <property type="project" value="TreeGrafter"/>
</dbReference>
<dbReference type="GO" id="GO:0019843">
    <property type="term" value="F:rRNA binding"/>
    <property type="evidence" value="ECO:0007669"/>
    <property type="project" value="UniProtKB-UniRule"/>
</dbReference>
<dbReference type="GO" id="GO:0003735">
    <property type="term" value="F:structural constituent of ribosome"/>
    <property type="evidence" value="ECO:0007669"/>
    <property type="project" value="InterPro"/>
</dbReference>
<dbReference type="GO" id="GO:0006412">
    <property type="term" value="P:translation"/>
    <property type="evidence" value="ECO:0007669"/>
    <property type="project" value="UniProtKB-UniRule"/>
</dbReference>
<dbReference type="FunFam" id="2.40.30.10:FF:000004">
    <property type="entry name" value="50S ribosomal protein L3"/>
    <property type="match status" value="1"/>
</dbReference>
<dbReference type="FunFam" id="3.30.160.810:FF:000002">
    <property type="entry name" value="50S ribosomal protein L3"/>
    <property type="match status" value="1"/>
</dbReference>
<dbReference type="Gene3D" id="3.30.160.810">
    <property type="match status" value="1"/>
</dbReference>
<dbReference type="Gene3D" id="2.40.30.10">
    <property type="entry name" value="Translation factors"/>
    <property type="match status" value="1"/>
</dbReference>
<dbReference type="HAMAP" id="MF_01325_B">
    <property type="entry name" value="Ribosomal_uL3_B"/>
    <property type="match status" value="1"/>
</dbReference>
<dbReference type="InterPro" id="IPR000597">
    <property type="entry name" value="Ribosomal_uL3"/>
</dbReference>
<dbReference type="InterPro" id="IPR019927">
    <property type="entry name" value="Ribosomal_uL3_bac/org-type"/>
</dbReference>
<dbReference type="InterPro" id="IPR019926">
    <property type="entry name" value="Ribosomal_uL3_CS"/>
</dbReference>
<dbReference type="InterPro" id="IPR009000">
    <property type="entry name" value="Transl_B-barrel_sf"/>
</dbReference>
<dbReference type="NCBIfam" id="TIGR03625">
    <property type="entry name" value="L3_bact"/>
    <property type="match status" value="1"/>
</dbReference>
<dbReference type="PANTHER" id="PTHR11229">
    <property type="entry name" value="50S RIBOSOMAL PROTEIN L3"/>
    <property type="match status" value="1"/>
</dbReference>
<dbReference type="PANTHER" id="PTHR11229:SF16">
    <property type="entry name" value="LARGE RIBOSOMAL SUBUNIT PROTEIN UL3C"/>
    <property type="match status" value="1"/>
</dbReference>
<dbReference type="Pfam" id="PF00297">
    <property type="entry name" value="Ribosomal_L3"/>
    <property type="match status" value="1"/>
</dbReference>
<dbReference type="SUPFAM" id="SSF50447">
    <property type="entry name" value="Translation proteins"/>
    <property type="match status" value="1"/>
</dbReference>
<dbReference type="PROSITE" id="PS00474">
    <property type="entry name" value="RIBOSOMAL_L3"/>
    <property type="match status" value="1"/>
</dbReference>
<name>RL3_BACCZ</name>
<accession>Q63H90</accession>
<gene>
    <name evidence="1" type="primary">rplC</name>
    <name type="ordered locus">BCE33L0104</name>
</gene>